<dbReference type="EMBL" id="AK002701">
    <property type="protein sequence ID" value="BAB22295.1"/>
    <property type="status" value="ALT_FRAME"/>
    <property type="molecule type" value="mRNA"/>
</dbReference>
<dbReference type="EMBL" id="BC064080">
    <property type="protein sequence ID" value="AAH64080.1"/>
    <property type="molecule type" value="mRNA"/>
</dbReference>
<dbReference type="EMBL" id="BC066053">
    <property type="protein sequence ID" value="AAH66053.1"/>
    <property type="molecule type" value="mRNA"/>
</dbReference>
<dbReference type="EMBL" id="BC117812">
    <property type="protein sequence ID" value="AAI17813.1"/>
    <property type="molecule type" value="mRNA"/>
</dbReference>
<dbReference type="CCDS" id="CCDS51808.1"/>
<dbReference type="RefSeq" id="NP_080972.1">
    <property type="nucleotide sequence ID" value="NM_026696.1"/>
</dbReference>
<dbReference type="SMR" id="Q149G0"/>
<dbReference type="FunCoup" id="Q149G0">
    <property type="interactions" value="106"/>
</dbReference>
<dbReference type="iPTMnet" id="Q149G0"/>
<dbReference type="PhosphoSitePlus" id="Q149G0"/>
<dbReference type="PaxDb" id="10090-ENSMUSP00000076957"/>
<dbReference type="Antibodypedia" id="31940">
    <property type="antibodies" value="37 antibodies from 11 providers"/>
</dbReference>
<dbReference type="Ensembl" id="ENSMUST00000077783.5">
    <property type="protein sequence ID" value="ENSMUSP00000076957.4"/>
    <property type="gene ID" value="ENSMUSG00000058706.6"/>
</dbReference>
<dbReference type="GeneID" id="68364"/>
<dbReference type="KEGG" id="mmu:68364"/>
<dbReference type="UCSC" id="uc009cig.2">
    <property type="organism name" value="mouse"/>
</dbReference>
<dbReference type="AGR" id="MGI:1915614"/>
<dbReference type="MGI" id="MGI:1915614">
    <property type="gene designation" value="0610030E20Rik"/>
</dbReference>
<dbReference type="VEuPathDB" id="HostDB:ENSMUSG00000058706"/>
<dbReference type="eggNOG" id="ENOG502S396">
    <property type="taxonomic scope" value="Eukaryota"/>
</dbReference>
<dbReference type="GeneTree" id="ENSGT00390000001901"/>
<dbReference type="HOGENOM" id="CLU_100251_0_0_1"/>
<dbReference type="InParanoid" id="Q149G0"/>
<dbReference type="OMA" id="FCLEYEG"/>
<dbReference type="PhylomeDB" id="Q149G0"/>
<dbReference type="TreeFam" id="TF328804"/>
<dbReference type="BioGRID-ORCS" id="68364">
    <property type="hits" value="2 hits in 77 CRISPR screens"/>
</dbReference>
<dbReference type="PRO" id="PR:Q149G0"/>
<dbReference type="Proteomes" id="UP000000589">
    <property type="component" value="Chromosome 6"/>
</dbReference>
<dbReference type="RNAct" id="Q149G0">
    <property type="molecule type" value="protein"/>
</dbReference>
<dbReference type="Bgee" id="ENSMUSG00000058706">
    <property type="expression patterns" value="Expressed in granulocyte and 65 other cell types or tissues"/>
</dbReference>
<dbReference type="InterPro" id="IPR018888">
    <property type="entry name" value="UPF0561"/>
</dbReference>
<dbReference type="PANTHER" id="PTHR34256">
    <property type="entry name" value="UPF0561 PROTEIN C2ORF68"/>
    <property type="match status" value="1"/>
</dbReference>
<dbReference type="PANTHER" id="PTHR34256:SF1">
    <property type="entry name" value="UPF0561 PROTEIN C2ORF68"/>
    <property type="match status" value="1"/>
</dbReference>
<dbReference type="Pfam" id="PF10573">
    <property type="entry name" value="UPF0561"/>
    <property type="match status" value="1"/>
</dbReference>
<reference key="1">
    <citation type="journal article" date="2005" name="Science">
        <title>The transcriptional landscape of the mammalian genome.</title>
        <authorList>
            <person name="Carninci P."/>
            <person name="Kasukawa T."/>
            <person name="Katayama S."/>
            <person name="Gough J."/>
            <person name="Frith M.C."/>
            <person name="Maeda N."/>
            <person name="Oyama R."/>
            <person name="Ravasi T."/>
            <person name="Lenhard B."/>
            <person name="Wells C."/>
            <person name="Kodzius R."/>
            <person name="Shimokawa K."/>
            <person name="Bajic V.B."/>
            <person name="Brenner S.E."/>
            <person name="Batalov S."/>
            <person name="Forrest A.R."/>
            <person name="Zavolan M."/>
            <person name="Davis M.J."/>
            <person name="Wilming L.G."/>
            <person name="Aidinis V."/>
            <person name="Allen J.E."/>
            <person name="Ambesi-Impiombato A."/>
            <person name="Apweiler R."/>
            <person name="Aturaliya R.N."/>
            <person name="Bailey T.L."/>
            <person name="Bansal M."/>
            <person name="Baxter L."/>
            <person name="Beisel K.W."/>
            <person name="Bersano T."/>
            <person name="Bono H."/>
            <person name="Chalk A.M."/>
            <person name="Chiu K.P."/>
            <person name="Choudhary V."/>
            <person name="Christoffels A."/>
            <person name="Clutterbuck D.R."/>
            <person name="Crowe M.L."/>
            <person name="Dalla E."/>
            <person name="Dalrymple B.P."/>
            <person name="de Bono B."/>
            <person name="Della Gatta G."/>
            <person name="di Bernardo D."/>
            <person name="Down T."/>
            <person name="Engstrom P."/>
            <person name="Fagiolini M."/>
            <person name="Faulkner G."/>
            <person name="Fletcher C.F."/>
            <person name="Fukushima T."/>
            <person name="Furuno M."/>
            <person name="Futaki S."/>
            <person name="Gariboldi M."/>
            <person name="Georgii-Hemming P."/>
            <person name="Gingeras T.R."/>
            <person name="Gojobori T."/>
            <person name="Green R.E."/>
            <person name="Gustincich S."/>
            <person name="Harbers M."/>
            <person name="Hayashi Y."/>
            <person name="Hensch T.K."/>
            <person name="Hirokawa N."/>
            <person name="Hill D."/>
            <person name="Huminiecki L."/>
            <person name="Iacono M."/>
            <person name="Ikeo K."/>
            <person name="Iwama A."/>
            <person name="Ishikawa T."/>
            <person name="Jakt M."/>
            <person name="Kanapin A."/>
            <person name="Katoh M."/>
            <person name="Kawasawa Y."/>
            <person name="Kelso J."/>
            <person name="Kitamura H."/>
            <person name="Kitano H."/>
            <person name="Kollias G."/>
            <person name="Krishnan S.P."/>
            <person name="Kruger A."/>
            <person name="Kummerfeld S.K."/>
            <person name="Kurochkin I.V."/>
            <person name="Lareau L.F."/>
            <person name="Lazarevic D."/>
            <person name="Lipovich L."/>
            <person name="Liu J."/>
            <person name="Liuni S."/>
            <person name="McWilliam S."/>
            <person name="Madan Babu M."/>
            <person name="Madera M."/>
            <person name="Marchionni L."/>
            <person name="Matsuda H."/>
            <person name="Matsuzawa S."/>
            <person name="Miki H."/>
            <person name="Mignone F."/>
            <person name="Miyake S."/>
            <person name="Morris K."/>
            <person name="Mottagui-Tabar S."/>
            <person name="Mulder N."/>
            <person name="Nakano N."/>
            <person name="Nakauchi H."/>
            <person name="Ng P."/>
            <person name="Nilsson R."/>
            <person name="Nishiguchi S."/>
            <person name="Nishikawa S."/>
            <person name="Nori F."/>
            <person name="Ohara O."/>
            <person name="Okazaki Y."/>
            <person name="Orlando V."/>
            <person name="Pang K.C."/>
            <person name="Pavan W.J."/>
            <person name="Pavesi G."/>
            <person name="Pesole G."/>
            <person name="Petrovsky N."/>
            <person name="Piazza S."/>
            <person name="Reed J."/>
            <person name="Reid J.F."/>
            <person name="Ring B.Z."/>
            <person name="Ringwald M."/>
            <person name="Rost B."/>
            <person name="Ruan Y."/>
            <person name="Salzberg S.L."/>
            <person name="Sandelin A."/>
            <person name="Schneider C."/>
            <person name="Schoenbach C."/>
            <person name="Sekiguchi K."/>
            <person name="Semple C.A."/>
            <person name="Seno S."/>
            <person name="Sessa L."/>
            <person name="Sheng Y."/>
            <person name="Shibata Y."/>
            <person name="Shimada H."/>
            <person name="Shimada K."/>
            <person name="Silva D."/>
            <person name="Sinclair B."/>
            <person name="Sperling S."/>
            <person name="Stupka E."/>
            <person name="Sugiura K."/>
            <person name="Sultana R."/>
            <person name="Takenaka Y."/>
            <person name="Taki K."/>
            <person name="Tammoja K."/>
            <person name="Tan S.L."/>
            <person name="Tang S."/>
            <person name="Taylor M.S."/>
            <person name="Tegner J."/>
            <person name="Teichmann S.A."/>
            <person name="Ueda H.R."/>
            <person name="van Nimwegen E."/>
            <person name="Verardo R."/>
            <person name="Wei C.L."/>
            <person name="Yagi K."/>
            <person name="Yamanishi H."/>
            <person name="Zabarovsky E."/>
            <person name="Zhu S."/>
            <person name="Zimmer A."/>
            <person name="Hide W."/>
            <person name="Bult C."/>
            <person name="Grimmond S.M."/>
            <person name="Teasdale R.D."/>
            <person name="Liu E.T."/>
            <person name="Brusic V."/>
            <person name="Quackenbush J."/>
            <person name="Wahlestedt C."/>
            <person name="Mattick J.S."/>
            <person name="Hume D.A."/>
            <person name="Kai C."/>
            <person name="Sasaki D."/>
            <person name="Tomaru Y."/>
            <person name="Fukuda S."/>
            <person name="Kanamori-Katayama M."/>
            <person name="Suzuki M."/>
            <person name="Aoki J."/>
            <person name="Arakawa T."/>
            <person name="Iida J."/>
            <person name="Imamura K."/>
            <person name="Itoh M."/>
            <person name="Kato T."/>
            <person name="Kawaji H."/>
            <person name="Kawagashira N."/>
            <person name="Kawashima T."/>
            <person name="Kojima M."/>
            <person name="Kondo S."/>
            <person name="Konno H."/>
            <person name="Nakano K."/>
            <person name="Ninomiya N."/>
            <person name="Nishio T."/>
            <person name="Okada M."/>
            <person name="Plessy C."/>
            <person name="Shibata K."/>
            <person name="Shiraki T."/>
            <person name="Suzuki S."/>
            <person name="Tagami M."/>
            <person name="Waki K."/>
            <person name="Watahiki A."/>
            <person name="Okamura-Oho Y."/>
            <person name="Suzuki H."/>
            <person name="Kawai J."/>
            <person name="Hayashizaki Y."/>
        </authorList>
    </citation>
    <scope>NUCLEOTIDE SEQUENCE [LARGE SCALE MRNA]</scope>
    <source>
        <strain>C57BL/6J</strain>
        <tissue>Kidney</tissue>
    </source>
</reference>
<reference key="2">
    <citation type="journal article" date="2004" name="Genome Res.">
        <title>The status, quality, and expansion of the NIH full-length cDNA project: the Mammalian Gene Collection (MGC).</title>
        <authorList>
            <consortium name="The MGC Project Team"/>
        </authorList>
    </citation>
    <scope>NUCLEOTIDE SEQUENCE [LARGE SCALE MRNA]</scope>
    <source>
        <strain>C57BL/6J</strain>
        <tissue>Brain</tissue>
        <tissue>Mammary gland</tissue>
    </source>
</reference>
<keyword id="KW-1185">Reference proteome</keyword>
<protein>
    <recommendedName>
        <fullName>UPF0561 protein C2orf68 homolog</fullName>
    </recommendedName>
</protein>
<feature type="chain" id="PRO_0000328786" description="UPF0561 protein C2orf68 homolog">
    <location>
        <begin position="1"/>
        <end position="166"/>
    </location>
</feature>
<feature type="region of interest" description="Disordered" evidence="1">
    <location>
        <begin position="32"/>
        <end position="107"/>
    </location>
</feature>
<feature type="compositionally biased region" description="Basic and acidic residues" evidence="1">
    <location>
        <begin position="32"/>
        <end position="49"/>
    </location>
</feature>
<feature type="compositionally biased region" description="Low complexity" evidence="1">
    <location>
        <begin position="91"/>
        <end position="101"/>
    </location>
</feature>
<name>CB068_MOUSE</name>
<proteinExistence type="evidence at transcript level"/>
<evidence type="ECO:0000256" key="1">
    <source>
        <dbReference type="SAM" id="MobiDB-lite"/>
    </source>
</evidence>
<evidence type="ECO:0000305" key="2"/>
<sequence>MEAAQDHGPGLCCKPGGRLDMSHGFVHHIRRNQLDRDDYDKKVKQAAKEKARRRHTPAPTRPRKPDLQVYLPRHRDGSTHPVNPDCEEASESSSSGSSELEPPGRQLFCLDYEADSGEVTSVIVYQDDDPGRVSEAVSAHTPLDPAMREALRSRIQEELAKRQSRH</sequence>
<comment type="similarity">
    <text evidence="2">Belongs to the UPF0561 family.</text>
</comment>
<comment type="sequence caution" evidence="2">
    <conflict type="frameshift">
        <sequence resource="EMBL-CDS" id="BAB22295"/>
    </conflict>
</comment>
<accession>Q149G0</accession>
<accession>Q9DCK6</accession>
<organism>
    <name type="scientific">Mus musculus</name>
    <name type="common">Mouse</name>
    <dbReference type="NCBI Taxonomy" id="10090"/>
    <lineage>
        <taxon>Eukaryota</taxon>
        <taxon>Metazoa</taxon>
        <taxon>Chordata</taxon>
        <taxon>Craniata</taxon>
        <taxon>Vertebrata</taxon>
        <taxon>Euteleostomi</taxon>
        <taxon>Mammalia</taxon>
        <taxon>Eutheria</taxon>
        <taxon>Euarchontoglires</taxon>
        <taxon>Glires</taxon>
        <taxon>Rodentia</taxon>
        <taxon>Myomorpha</taxon>
        <taxon>Muroidea</taxon>
        <taxon>Muridae</taxon>
        <taxon>Murinae</taxon>
        <taxon>Mus</taxon>
        <taxon>Mus</taxon>
    </lineage>
</organism>